<gene>
    <name evidence="1" type="primary">lig</name>
    <name type="ordered locus">PF1635</name>
</gene>
<keyword id="KW-0002">3D-structure</keyword>
<keyword id="KW-0067">ATP-binding</keyword>
<keyword id="KW-0131">Cell cycle</keyword>
<keyword id="KW-0132">Cell division</keyword>
<keyword id="KW-0903">Direct protein sequencing</keyword>
<keyword id="KW-0227">DNA damage</keyword>
<keyword id="KW-0233">DNA recombination</keyword>
<keyword id="KW-0234">DNA repair</keyword>
<keyword id="KW-0235">DNA replication</keyword>
<keyword id="KW-0436">Ligase</keyword>
<keyword id="KW-0460">Magnesium</keyword>
<keyword id="KW-0479">Metal-binding</keyword>
<keyword id="KW-0547">Nucleotide-binding</keyword>
<keyword id="KW-1185">Reference proteome</keyword>
<comment type="function">
    <text evidence="1">DNA ligase that seals nicks in double-stranded DNA during DNA replication, DNA recombination and DNA repair.</text>
</comment>
<comment type="catalytic activity">
    <reaction evidence="1 2">
        <text>ATP + (deoxyribonucleotide)n-3'-hydroxyl + 5'-phospho-(deoxyribonucleotide)m = (deoxyribonucleotide)n+m + AMP + diphosphate.</text>
        <dbReference type="EC" id="6.5.1.1"/>
    </reaction>
</comment>
<comment type="cofactor">
    <cofactor evidence="1 3">
        <name>Mg(2+)</name>
        <dbReference type="ChEBI" id="CHEBI:18420"/>
    </cofactor>
</comment>
<comment type="biophysicochemical properties">
    <temperatureDependence>
        <text>Optimum temperature is about 70 degrees Celsius. Active from 4 to 100 degrees Celsius. Thermostable.</text>
    </temperatureDependence>
</comment>
<comment type="subunit">
    <text evidence="2">Monomer.</text>
</comment>
<comment type="similarity">
    <text evidence="1">Belongs to the ATP-dependent DNA ligase family.</text>
</comment>
<name>DNLI_PYRFU</name>
<evidence type="ECO:0000255" key="1">
    <source>
        <dbReference type="HAMAP-Rule" id="MF_00407"/>
    </source>
</evidence>
<evidence type="ECO:0000269" key="2">
    <source>
    </source>
</evidence>
<evidence type="ECO:0000305" key="3">
    <source>
    </source>
</evidence>
<evidence type="ECO:0007744" key="4">
    <source>
        <dbReference type="PDB" id="2CFM"/>
    </source>
</evidence>
<evidence type="ECO:0007829" key="5">
    <source>
        <dbReference type="PDB" id="2CFM"/>
    </source>
</evidence>
<reference key="1">
    <citation type="patent" date="1997-12-23" number="US5700672">
        <title>Purified thermostable Pyrococcus furiosus DNA ligase.</title>
        <authorList>
            <person name="Mathur E.J."/>
            <person name="Marsh E.J."/>
            <person name="Schoettlin W.E."/>
        </authorList>
    </citation>
    <scope>NUCLEOTIDE SEQUENCE [GENOMIC DNA]</scope>
    <scope>PROTEIN SEQUENCE OF N-TERMINUS</scope>
    <source>
        <strain>ATCC 43587 / DSM 3638 / JCM 8422 / Vc1</strain>
    </source>
</reference>
<reference key="2">
    <citation type="journal article" date="1999" name="Genetics">
        <title>Divergence of the hyperthermophilic archaea Pyrococcus furiosus and P. horikoshii inferred from complete genomic sequences.</title>
        <authorList>
            <person name="Maeder D.L."/>
            <person name="Weiss R.B."/>
            <person name="Dunn D.M."/>
            <person name="Cherry J.L."/>
            <person name="Gonzalez J.M."/>
            <person name="DiRuggiero J."/>
            <person name="Robb F.T."/>
        </authorList>
    </citation>
    <scope>NUCLEOTIDE SEQUENCE [LARGE SCALE GENOMIC DNA]</scope>
    <source>
        <strain>ATCC 43587 / DSM 3638 / JCM 8422 / Vc1</strain>
    </source>
</reference>
<reference key="3">
    <citation type="journal article" date="2006" name="J. Mol. Biol.">
        <title>The closed structure of an archaeal DNA ligase from Pyrococcus furiosus.</title>
        <authorList>
            <person name="Nishida H."/>
            <person name="Kiyonari S."/>
            <person name="Ishino Y."/>
            <person name="Morikawa K."/>
        </authorList>
    </citation>
    <scope>X-RAY CRYSTALLOGRAPHY (1.8 ANGSTROMS) OF MUTANT ALA-534 IN COMPLEX WITH AMP</scope>
    <scope>ACTIVE SITE</scope>
    <scope>CATALYTIC ACTIVITY</scope>
    <scope>COFACTOR</scope>
    <scope>MUTAGENESIS OF LYS-249; ARG-531 AND LYS-534</scope>
</reference>
<organism>
    <name type="scientific">Pyrococcus furiosus (strain ATCC 43587 / DSM 3638 / JCM 8422 / Vc1)</name>
    <dbReference type="NCBI Taxonomy" id="186497"/>
    <lineage>
        <taxon>Archaea</taxon>
        <taxon>Methanobacteriati</taxon>
        <taxon>Methanobacteriota</taxon>
        <taxon>Thermococci</taxon>
        <taxon>Thermococcales</taxon>
        <taxon>Thermococcaceae</taxon>
        <taxon>Pyrococcus</taxon>
    </lineage>
</organism>
<feature type="chain" id="PRO_0000059613" description="DNA ligase">
    <location>
        <begin position="1"/>
        <end position="561"/>
    </location>
</feature>
<feature type="active site" description="N6-AMP-lysine intermediate" evidence="1 2">
    <location>
        <position position="249"/>
    </location>
</feature>
<feature type="binding site" evidence="1 2 4">
    <location>
        <position position="247"/>
    </location>
    <ligand>
        <name>ATP</name>
        <dbReference type="ChEBI" id="CHEBI:30616"/>
    </ligand>
</feature>
<feature type="binding site" evidence="1 2 4">
    <location>
        <position position="254"/>
    </location>
    <ligand>
        <name>ATP</name>
        <dbReference type="ChEBI" id="CHEBI:30616"/>
    </ligand>
</feature>
<feature type="binding site" evidence="1 2 4">
    <location>
        <position position="269"/>
    </location>
    <ligand>
        <name>ATP</name>
        <dbReference type="ChEBI" id="CHEBI:30616"/>
    </ligand>
</feature>
<feature type="binding site" evidence="1 2 4">
    <location>
        <position position="299"/>
    </location>
    <ligand>
        <name>ATP</name>
        <dbReference type="ChEBI" id="CHEBI:30616"/>
    </ligand>
</feature>
<feature type="binding site" evidence="1 2 4">
    <location>
        <position position="339"/>
    </location>
    <ligand>
        <name>ATP</name>
        <dbReference type="ChEBI" id="CHEBI:30616"/>
    </ligand>
</feature>
<feature type="binding site" evidence="1">
    <location>
        <position position="414"/>
    </location>
    <ligand>
        <name>ATP</name>
        <dbReference type="ChEBI" id="CHEBI:30616"/>
    </ligand>
</feature>
<feature type="binding site" evidence="1 2 4">
    <location>
        <position position="420"/>
    </location>
    <ligand>
        <name>ATP</name>
        <dbReference type="ChEBI" id="CHEBI:30616"/>
    </ligand>
</feature>
<feature type="mutagenesis site" description="Loss of N6-AMP-lysine intermediate." evidence="2">
    <original>K</original>
    <variation>A</variation>
    <location>
        <position position="249"/>
    </location>
</feature>
<feature type="mutagenesis site" description="Reduced ATP binding and enzyme activity; when associated with A-534." evidence="2">
    <original>R</original>
    <variation>A</variation>
    <location>
        <position position="531"/>
    </location>
</feature>
<feature type="mutagenesis site" description="Reduced ATP binding and enzyme activity; when associated with A-531." evidence="2">
    <original>K</original>
    <variation>A</variation>
    <location>
        <position position="534"/>
    </location>
</feature>
<feature type="helix" evidence="5">
    <location>
        <begin position="3"/>
        <end position="14"/>
    </location>
</feature>
<feature type="helix" evidence="5">
    <location>
        <begin position="19"/>
        <end position="32"/>
    </location>
</feature>
<feature type="helix" evidence="5">
    <location>
        <begin position="35"/>
        <end position="37"/>
    </location>
</feature>
<feature type="turn" evidence="5">
    <location>
        <begin position="38"/>
        <end position="40"/>
    </location>
</feature>
<feature type="helix" evidence="5">
    <location>
        <begin position="41"/>
        <end position="45"/>
    </location>
</feature>
<feature type="helix" evidence="5">
    <location>
        <begin position="62"/>
        <end position="73"/>
    </location>
</feature>
<feature type="helix" evidence="5">
    <location>
        <begin position="77"/>
        <end position="87"/>
    </location>
</feature>
<feature type="helix" evidence="5">
    <location>
        <begin position="90"/>
        <end position="101"/>
    </location>
</feature>
<feature type="turn" evidence="5">
    <location>
        <begin position="102"/>
        <end position="104"/>
    </location>
</feature>
<feature type="helix" evidence="5">
    <location>
        <begin position="113"/>
        <end position="125"/>
    </location>
</feature>
<feature type="strand" evidence="5">
    <location>
        <begin position="128"/>
        <end position="130"/>
    </location>
</feature>
<feature type="helix" evidence="5">
    <location>
        <begin position="131"/>
        <end position="143"/>
    </location>
</feature>
<feature type="helix" evidence="5">
    <location>
        <begin position="148"/>
        <end position="159"/>
    </location>
</feature>
<feature type="helix" evidence="5">
    <location>
        <begin position="168"/>
        <end position="178"/>
    </location>
</feature>
<feature type="helix" evidence="5">
    <location>
        <begin position="183"/>
        <end position="193"/>
    </location>
</feature>
<feature type="helix" evidence="5">
    <location>
        <begin position="196"/>
        <end position="213"/>
    </location>
</feature>
<feature type="strand" evidence="5">
    <location>
        <begin position="226"/>
        <end position="231"/>
    </location>
</feature>
<feature type="helix" evidence="5">
    <location>
        <begin position="233"/>
        <end position="239"/>
    </location>
</feature>
<feature type="strand" evidence="5">
    <location>
        <begin position="244"/>
        <end position="249"/>
    </location>
</feature>
<feature type="strand" evidence="5">
    <location>
        <begin position="252"/>
        <end position="260"/>
    </location>
</feature>
<feature type="strand" evidence="5">
    <location>
        <begin position="263"/>
        <end position="267"/>
    </location>
</feature>
<feature type="helix" evidence="5">
    <location>
        <begin position="275"/>
        <end position="277"/>
    </location>
</feature>
<feature type="helix" evidence="5">
    <location>
        <begin position="279"/>
        <end position="288"/>
    </location>
</feature>
<feature type="strand" evidence="5">
    <location>
        <begin position="291"/>
        <end position="303"/>
    </location>
</feature>
<feature type="strand" evidence="5">
    <location>
        <begin position="307"/>
        <end position="309"/>
    </location>
</feature>
<feature type="helix" evidence="5">
    <location>
        <begin position="313"/>
        <end position="320"/>
    </location>
</feature>
<feature type="helix" evidence="5">
    <location>
        <begin position="325"/>
        <end position="331"/>
    </location>
</feature>
<feature type="strand" evidence="5">
    <location>
        <begin position="334"/>
        <end position="344"/>
    </location>
</feature>
<feature type="helix" evidence="5">
    <location>
        <begin position="354"/>
        <end position="364"/>
    </location>
</feature>
<feature type="strand" evidence="5">
    <location>
        <begin position="369"/>
        <end position="373"/>
    </location>
</feature>
<feature type="strand" evidence="5">
    <location>
        <begin position="376"/>
        <end position="380"/>
    </location>
</feature>
<feature type="helix" evidence="5">
    <location>
        <begin position="382"/>
        <end position="394"/>
    </location>
</feature>
<feature type="strand" evidence="5">
    <location>
        <begin position="399"/>
        <end position="403"/>
    </location>
</feature>
<feature type="strand" evidence="5">
    <location>
        <begin position="414"/>
        <end position="421"/>
    </location>
</feature>
<feature type="strand" evidence="5">
    <location>
        <begin position="428"/>
        <end position="437"/>
    </location>
</feature>
<feature type="helix" evidence="5">
    <location>
        <begin position="440"/>
        <end position="442"/>
    </location>
</feature>
<feature type="strand" evidence="5">
    <location>
        <begin position="445"/>
        <end position="454"/>
    </location>
</feature>
<feature type="turn" evidence="5">
    <location>
        <begin position="456"/>
        <end position="458"/>
    </location>
</feature>
<feature type="strand" evidence="5">
    <location>
        <begin position="461"/>
        <end position="467"/>
    </location>
</feature>
<feature type="helix" evidence="5">
    <location>
        <begin position="473"/>
        <end position="483"/>
    </location>
</feature>
<feature type="helix" evidence="5">
    <location>
        <begin position="484"/>
        <end position="486"/>
    </location>
</feature>
<feature type="strand" evidence="5">
    <location>
        <begin position="487"/>
        <end position="491"/>
    </location>
</feature>
<feature type="strand" evidence="5">
    <location>
        <begin position="494"/>
        <end position="497"/>
    </location>
</feature>
<feature type="strand" evidence="5">
    <location>
        <begin position="502"/>
        <end position="506"/>
    </location>
</feature>
<feature type="strand" evidence="5">
    <location>
        <begin position="508"/>
        <end position="511"/>
    </location>
</feature>
<feature type="strand" evidence="5">
    <location>
        <begin position="514"/>
        <end position="516"/>
    </location>
</feature>
<feature type="strand" evidence="5">
    <location>
        <begin position="521"/>
        <end position="524"/>
    </location>
</feature>
<feature type="strand" evidence="5">
    <location>
        <begin position="526"/>
        <end position="530"/>
    </location>
</feature>
<feature type="helix" evidence="5">
    <location>
        <begin position="536"/>
        <end position="538"/>
    </location>
</feature>
<feature type="helix" evidence="5">
    <location>
        <begin position="542"/>
        <end position="557"/>
    </location>
</feature>
<accession>P56709</accession>
<proteinExistence type="evidence at protein level"/>
<dbReference type="EC" id="6.5.1.1" evidence="1 2"/>
<dbReference type="EMBL" id="AE009950">
    <property type="protein sequence ID" value="AAL81759.1"/>
    <property type="molecule type" value="Genomic_DNA"/>
</dbReference>
<dbReference type="RefSeq" id="WP_011012782.1">
    <property type="nucleotide sequence ID" value="NZ_CP023154.1"/>
</dbReference>
<dbReference type="PDB" id="2CFM">
    <property type="method" value="X-ray"/>
    <property type="resolution" value="1.80 A"/>
    <property type="chains" value="A=1-561"/>
</dbReference>
<dbReference type="PDBsum" id="2CFM"/>
<dbReference type="SMR" id="P56709"/>
<dbReference type="DIP" id="DIP-48778N"/>
<dbReference type="IntAct" id="P56709">
    <property type="interactions" value="1"/>
</dbReference>
<dbReference type="STRING" id="186497.PF1635"/>
<dbReference type="PaxDb" id="186497-PF1635"/>
<dbReference type="KEGG" id="pfu:PF1635"/>
<dbReference type="PATRIC" id="fig|186497.12.peg.1701"/>
<dbReference type="eggNOG" id="arCOG01347">
    <property type="taxonomic scope" value="Archaea"/>
</dbReference>
<dbReference type="HOGENOM" id="CLU_005138_6_0_2"/>
<dbReference type="OrthoDB" id="31274at2157"/>
<dbReference type="PhylomeDB" id="P56709"/>
<dbReference type="BRENDA" id="6.5.1.1">
    <property type="organism ID" value="5243"/>
</dbReference>
<dbReference type="EvolutionaryTrace" id="P56709"/>
<dbReference type="Proteomes" id="UP000001013">
    <property type="component" value="Chromosome"/>
</dbReference>
<dbReference type="GO" id="GO:0005524">
    <property type="term" value="F:ATP binding"/>
    <property type="evidence" value="ECO:0007669"/>
    <property type="project" value="UniProtKB-UniRule"/>
</dbReference>
<dbReference type="GO" id="GO:0003677">
    <property type="term" value="F:DNA binding"/>
    <property type="evidence" value="ECO:0007669"/>
    <property type="project" value="InterPro"/>
</dbReference>
<dbReference type="GO" id="GO:0003910">
    <property type="term" value="F:DNA ligase (ATP) activity"/>
    <property type="evidence" value="ECO:0007669"/>
    <property type="project" value="UniProtKB-UniRule"/>
</dbReference>
<dbReference type="GO" id="GO:0046872">
    <property type="term" value="F:metal ion binding"/>
    <property type="evidence" value="ECO:0007669"/>
    <property type="project" value="UniProtKB-KW"/>
</dbReference>
<dbReference type="GO" id="GO:0051301">
    <property type="term" value="P:cell division"/>
    <property type="evidence" value="ECO:0007669"/>
    <property type="project" value="UniProtKB-KW"/>
</dbReference>
<dbReference type="GO" id="GO:0071897">
    <property type="term" value="P:DNA biosynthetic process"/>
    <property type="evidence" value="ECO:0007669"/>
    <property type="project" value="InterPro"/>
</dbReference>
<dbReference type="GO" id="GO:0006310">
    <property type="term" value="P:DNA recombination"/>
    <property type="evidence" value="ECO:0007669"/>
    <property type="project" value="UniProtKB-UniRule"/>
</dbReference>
<dbReference type="GO" id="GO:0006281">
    <property type="term" value="P:DNA repair"/>
    <property type="evidence" value="ECO:0007669"/>
    <property type="project" value="UniProtKB-UniRule"/>
</dbReference>
<dbReference type="GO" id="GO:0006273">
    <property type="term" value="P:lagging strand elongation"/>
    <property type="evidence" value="ECO:0007669"/>
    <property type="project" value="TreeGrafter"/>
</dbReference>
<dbReference type="CDD" id="cd07901">
    <property type="entry name" value="Adenylation_DNA_ligase_Arch_LigB"/>
    <property type="match status" value="1"/>
</dbReference>
<dbReference type="CDD" id="cd07972">
    <property type="entry name" value="OBF_DNA_ligase_Arch_LigB"/>
    <property type="match status" value="1"/>
</dbReference>
<dbReference type="FunFam" id="1.10.3260.10:FF:000007">
    <property type="entry name" value="DNA ligase"/>
    <property type="match status" value="1"/>
</dbReference>
<dbReference type="FunFam" id="2.40.50.140:FF:000163">
    <property type="entry name" value="Probable DNA ligase"/>
    <property type="match status" value="1"/>
</dbReference>
<dbReference type="FunFam" id="3.30.470.30:FF:000012">
    <property type="entry name" value="Probable DNA ligase"/>
    <property type="match status" value="1"/>
</dbReference>
<dbReference type="Gene3D" id="1.10.3260.10">
    <property type="entry name" value="DNA ligase, ATP-dependent, N-terminal domain"/>
    <property type="match status" value="1"/>
</dbReference>
<dbReference type="Gene3D" id="3.30.470.30">
    <property type="entry name" value="DNA ligase/mRNA capping enzyme"/>
    <property type="match status" value="1"/>
</dbReference>
<dbReference type="Gene3D" id="2.40.50.140">
    <property type="entry name" value="Nucleic acid-binding proteins"/>
    <property type="match status" value="1"/>
</dbReference>
<dbReference type="HAMAP" id="MF_00407">
    <property type="entry name" value="DNA_ligase"/>
    <property type="match status" value="1"/>
</dbReference>
<dbReference type="InterPro" id="IPR050191">
    <property type="entry name" value="ATP-dep_DNA_ligase"/>
</dbReference>
<dbReference type="InterPro" id="IPR022865">
    <property type="entry name" value="DNA_ligae_ATP-dep_bac/arc"/>
</dbReference>
<dbReference type="InterPro" id="IPR000977">
    <property type="entry name" value="DNA_ligase_ATP-dep"/>
</dbReference>
<dbReference type="InterPro" id="IPR012309">
    <property type="entry name" value="DNA_ligase_ATP-dep_C"/>
</dbReference>
<dbReference type="InterPro" id="IPR012310">
    <property type="entry name" value="DNA_ligase_ATP-dep_cent"/>
</dbReference>
<dbReference type="InterPro" id="IPR016059">
    <property type="entry name" value="DNA_ligase_ATP-dep_CS"/>
</dbReference>
<dbReference type="InterPro" id="IPR012308">
    <property type="entry name" value="DNA_ligase_ATP-dep_N"/>
</dbReference>
<dbReference type="InterPro" id="IPR036599">
    <property type="entry name" value="DNA_ligase_N_sf"/>
</dbReference>
<dbReference type="InterPro" id="IPR012340">
    <property type="entry name" value="NA-bd_OB-fold"/>
</dbReference>
<dbReference type="NCBIfam" id="TIGR00574">
    <property type="entry name" value="dnl1"/>
    <property type="match status" value="1"/>
</dbReference>
<dbReference type="PANTHER" id="PTHR45674:SF7">
    <property type="entry name" value="DNA LIGASE"/>
    <property type="match status" value="1"/>
</dbReference>
<dbReference type="PANTHER" id="PTHR45674">
    <property type="entry name" value="DNA LIGASE 1/3 FAMILY MEMBER"/>
    <property type="match status" value="1"/>
</dbReference>
<dbReference type="Pfam" id="PF04679">
    <property type="entry name" value="DNA_ligase_A_C"/>
    <property type="match status" value="1"/>
</dbReference>
<dbReference type="Pfam" id="PF01068">
    <property type="entry name" value="DNA_ligase_A_M"/>
    <property type="match status" value="1"/>
</dbReference>
<dbReference type="Pfam" id="PF04675">
    <property type="entry name" value="DNA_ligase_A_N"/>
    <property type="match status" value="1"/>
</dbReference>
<dbReference type="SUPFAM" id="SSF117018">
    <property type="entry name" value="ATP-dependent DNA ligase DNA-binding domain"/>
    <property type="match status" value="1"/>
</dbReference>
<dbReference type="SUPFAM" id="SSF56091">
    <property type="entry name" value="DNA ligase/mRNA capping enzyme, catalytic domain"/>
    <property type="match status" value="1"/>
</dbReference>
<dbReference type="SUPFAM" id="SSF50249">
    <property type="entry name" value="Nucleic acid-binding proteins"/>
    <property type="match status" value="1"/>
</dbReference>
<dbReference type="PROSITE" id="PS00697">
    <property type="entry name" value="DNA_LIGASE_A1"/>
    <property type="match status" value="1"/>
</dbReference>
<dbReference type="PROSITE" id="PS00333">
    <property type="entry name" value="DNA_LIGASE_A2"/>
    <property type="match status" value="1"/>
</dbReference>
<dbReference type="PROSITE" id="PS50160">
    <property type="entry name" value="DNA_LIGASE_A3"/>
    <property type="match status" value="1"/>
</dbReference>
<protein>
    <recommendedName>
        <fullName evidence="1">DNA ligase</fullName>
        <ecNumber evidence="1 2">6.5.1.1</ecNumber>
    </recommendedName>
    <alternativeName>
        <fullName evidence="1">Polydeoxyribonucleotide synthase [ATP]</fullName>
    </alternativeName>
</protein>
<sequence>MRYLELAQLYQKLEKTTMKLIKTRLVADFLKKVPDDHLEFIPYLILGEVFPEWDERELGVGEKLLIKAVAMATGIDAKEIEESVKDTGDLGESIALAVKKKKQKSFFSQPLTIKRVYQTLVKVAETTGEGSQDKKVKYLADLFMDAEPLEAKYLARTILGTMRTGVAEGLLRDAIAMAFHVKVELVERAYMLTSDFGYVAKIAKLEGNEGLAKVQVQLGKPIKPMLAQQAASIRDALLEMGGEAEFEIKYDGARVQVHKDGSKIIVYSRRLENVTRAIPEIVEALKEAIIPEKAIVEGELVAIGENGRPLPFQYVLRRFRRKHNIEEMMEKIPLELNLFDVLYVDGQSLIDTKFIDRRRTLEEIIKQNEKIKVAENLITKKVEEAEAFYKRALEMGHEGLMAKRLDAVYEPGNRGKKWLKIKPTMENLDLVIIGAEWGEGRRAHLFGSFILGAYDPETGEFLEVGKVGSGFTDDDLVEFTKMLKPLIIKEEGKRVWLQPKVVIEVTYQEIQKSPKYRSGFALRFPRFVALRDDKGPEDADTIERIAQLYELQEKMKGKVES</sequence>